<sequence>MTTVYYDQDVKTDALQGKKIAVVGYGSQGHAHAQNLKDNGYDVVIGIRPGRSFDKAKEDGFDVFPVAEAVKQADVIMVLLPDEIQGDVYKNEIEPNLEKHNALAFAHGFNIHFGVIQPPADVDVFLVAPKGPGHLVRRTFVEGSAVPSLFGIQQGASGQARNIALSYAKGIGATRAGVIETTFKEETETDLFGEQAVLCGGVSKLIQSGFETLVEAGYQPELAYFEVLHEMKLIVDLMYEGGMENVRYSISNTAEFGDYVSGPRVITPDVKENMKAVLTDIQNGNFSNRFIEDNKNGFKEFYKLREEQHGHQIEKVGRELREMMPFIKSKSIEK</sequence>
<protein>
    <recommendedName>
        <fullName evidence="1">Ketol-acid reductoisomerase (NADP(+))</fullName>
        <shortName evidence="1">KARI</shortName>
        <ecNumber evidence="1">1.1.1.86</ecNumber>
    </recommendedName>
    <alternativeName>
        <fullName evidence="1">Acetohydroxy-acid isomeroreductase</fullName>
        <shortName evidence="1">AHIR</shortName>
    </alternativeName>
    <alternativeName>
        <fullName evidence="1">Alpha-keto-beta-hydroxylacyl reductoisomerase</fullName>
    </alternativeName>
    <alternativeName>
        <fullName evidence="1">Ketol-acid reductoisomerase type 1</fullName>
    </alternativeName>
    <alternativeName>
        <fullName evidence="1">Ketol-acid reductoisomerase type I</fullName>
    </alternativeName>
</protein>
<proteinExistence type="inferred from homology"/>
<reference key="1">
    <citation type="journal article" date="2006" name="Lancet">
        <title>Complete genome sequence of USA300, an epidemic clone of community-acquired meticillin-resistant Staphylococcus aureus.</title>
        <authorList>
            <person name="Diep B.A."/>
            <person name="Gill S.R."/>
            <person name="Chang R.F."/>
            <person name="Phan T.H."/>
            <person name="Chen J.H."/>
            <person name="Davidson M.G."/>
            <person name="Lin F."/>
            <person name="Lin J."/>
            <person name="Carleton H.A."/>
            <person name="Mongodin E.F."/>
            <person name="Sensabaugh G.F."/>
            <person name="Perdreau-Remington F."/>
        </authorList>
    </citation>
    <scope>NUCLEOTIDE SEQUENCE [LARGE SCALE GENOMIC DNA]</scope>
    <source>
        <strain>USA300</strain>
    </source>
</reference>
<gene>
    <name evidence="1" type="primary">ilvC</name>
    <name type="ordered locus">SAUSA300_2009</name>
</gene>
<evidence type="ECO:0000255" key="1">
    <source>
        <dbReference type="HAMAP-Rule" id="MF_00435"/>
    </source>
</evidence>
<evidence type="ECO:0000255" key="2">
    <source>
        <dbReference type="PROSITE-ProRule" id="PRU01197"/>
    </source>
</evidence>
<evidence type="ECO:0000255" key="3">
    <source>
        <dbReference type="PROSITE-ProRule" id="PRU01198"/>
    </source>
</evidence>
<dbReference type="EC" id="1.1.1.86" evidence="1"/>
<dbReference type="EMBL" id="CP000255">
    <property type="protein sequence ID" value="ABD21918.1"/>
    <property type="molecule type" value="Genomic_DNA"/>
</dbReference>
<dbReference type="RefSeq" id="WP_000214557.1">
    <property type="nucleotide sequence ID" value="NZ_CP027476.1"/>
</dbReference>
<dbReference type="SMR" id="Q2FF68"/>
<dbReference type="KEGG" id="saa:SAUSA300_2009"/>
<dbReference type="HOGENOM" id="CLU_033821_0_1_9"/>
<dbReference type="OMA" id="RAMFSWL"/>
<dbReference type="UniPathway" id="UPA00047">
    <property type="reaction ID" value="UER00056"/>
</dbReference>
<dbReference type="UniPathway" id="UPA00049">
    <property type="reaction ID" value="UER00060"/>
</dbReference>
<dbReference type="Proteomes" id="UP000001939">
    <property type="component" value="Chromosome"/>
</dbReference>
<dbReference type="GO" id="GO:0005829">
    <property type="term" value="C:cytosol"/>
    <property type="evidence" value="ECO:0007669"/>
    <property type="project" value="TreeGrafter"/>
</dbReference>
<dbReference type="GO" id="GO:0004455">
    <property type="term" value="F:ketol-acid reductoisomerase activity"/>
    <property type="evidence" value="ECO:0007669"/>
    <property type="project" value="UniProtKB-UniRule"/>
</dbReference>
<dbReference type="GO" id="GO:0000287">
    <property type="term" value="F:magnesium ion binding"/>
    <property type="evidence" value="ECO:0007669"/>
    <property type="project" value="UniProtKB-UniRule"/>
</dbReference>
<dbReference type="GO" id="GO:0050661">
    <property type="term" value="F:NADP binding"/>
    <property type="evidence" value="ECO:0007669"/>
    <property type="project" value="InterPro"/>
</dbReference>
<dbReference type="GO" id="GO:0009097">
    <property type="term" value="P:isoleucine biosynthetic process"/>
    <property type="evidence" value="ECO:0007669"/>
    <property type="project" value="UniProtKB-UniRule"/>
</dbReference>
<dbReference type="GO" id="GO:0009099">
    <property type="term" value="P:L-valine biosynthetic process"/>
    <property type="evidence" value="ECO:0007669"/>
    <property type="project" value="UniProtKB-UniRule"/>
</dbReference>
<dbReference type="FunFam" id="3.40.50.720:FF:000023">
    <property type="entry name" value="Ketol-acid reductoisomerase (NADP(+))"/>
    <property type="match status" value="1"/>
</dbReference>
<dbReference type="Gene3D" id="6.10.240.10">
    <property type="match status" value="1"/>
</dbReference>
<dbReference type="Gene3D" id="3.40.50.720">
    <property type="entry name" value="NAD(P)-binding Rossmann-like Domain"/>
    <property type="match status" value="1"/>
</dbReference>
<dbReference type="HAMAP" id="MF_00435">
    <property type="entry name" value="IlvC"/>
    <property type="match status" value="1"/>
</dbReference>
<dbReference type="InterPro" id="IPR008927">
    <property type="entry name" value="6-PGluconate_DH-like_C_sf"/>
</dbReference>
<dbReference type="InterPro" id="IPR013023">
    <property type="entry name" value="KARI"/>
</dbReference>
<dbReference type="InterPro" id="IPR000506">
    <property type="entry name" value="KARI_C"/>
</dbReference>
<dbReference type="InterPro" id="IPR013116">
    <property type="entry name" value="KARI_N"/>
</dbReference>
<dbReference type="InterPro" id="IPR014359">
    <property type="entry name" value="KARI_prok"/>
</dbReference>
<dbReference type="InterPro" id="IPR036291">
    <property type="entry name" value="NAD(P)-bd_dom_sf"/>
</dbReference>
<dbReference type="NCBIfam" id="TIGR00465">
    <property type="entry name" value="ilvC"/>
    <property type="match status" value="1"/>
</dbReference>
<dbReference type="NCBIfam" id="NF004017">
    <property type="entry name" value="PRK05479.1"/>
    <property type="match status" value="1"/>
</dbReference>
<dbReference type="NCBIfam" id="NF009940">
    <property type="entry name" value="PRK13403.1"/>
    <property type="match status" value="1"/>
</dbReference>
<dbReference type="PANTHER" id="PTHR21371">
    <property type="entry name" value="KETOL-ACID REDUCTOISOMERASE, MITOCHONDRIAL"/>
    <property type="match status" value="1"/>
</dbReference>
<dbReference type="PANTHER" id="PTHR21371:SF1">
    <property type="entry name" value="KETOL-ACID REDUCTOISOMERASE, MITOCHONDRIAL"/>
    <property type="match status" value="1"/>
</dbReference>
<dbReference type="Pfam" id="PF01450">
    <property type="entry name" value="KARI_C"/>
    <property type="match status" value="1"/>
</dbReference>
<dbReference type="Pfam" id="PF07991">
    <property type="entry name" value="KARI_N"/>
    <property type="match status" value="1"/>
</dbReference>
<dbReference type="PIRSF" id="PIRSF000116">
    <property type="entry name" value="IlvC_gammaproteo"/>
    <property type="match status" value="1"/>
</dbReference>
<dbReference type="SUPFAM" id="SSF48179">
    <property type="entry name" value="6-phosphogluconate dehydrogenase C-terminal domain-like"/>
    <property type="match status" value="1"/>
</dbReference>
<dbReference type="SUPFAM" id="SSF51735">
    <property type="entry name" value="NAD(P)-binding Rossmann-fold domains"/>
    <property type="match status" value="1"/>
</dbReference>
<dbReference type="PROSITE" id="PS51851">
    <property type="entry name" value="KARI_C"/>
    <property type="match status" value="1"/>
</dbReference>
<dbReference type="PROSITE" id="PS51850">
    <property type="entry name" value="KARI_N"/>
    <property type="match status" value="1"/>
</dbReference>
<accession>Q2FF68</accession>
<organism>
    <name type="scientific">Staphylococcus aureus (strain USA300)</name>
    <dbReference type="NCBI Taxonomy" id="367830"/>
    <lineage>
        <taxon>Bacteria</taxon>
        <taxon>Bacillati</taxon>
        <taxon>Bacillota</taxon>
        <taxon>Bacilli</taxon>
        <taxon>Bacillales</taxon>
        <taxon>Staphylococcaceae</taxon>
        <taxon>Staphylococcus</taxon>
    </lineage>
</organism>
<keyword id="KW-0028">Amino-acid biosynthesis</keyword>
<keyword id="KW-0100">Branched-chain amino acid biosynthesis</keyword>
<keyword id="KW-0460">Magnesium</keyword>
<keyword id="KW-0479">Metal-binding</keyword>
<keyword id="KW-0521">NADP</keyword>
<keyword id="KW-0560">Oxidoreductase</keyword>
<comment type="function">
    <text evidence="1">Involved in the biosynthesis of branched-chain amino acids (BCAA). Catalyzes an alkyl-migration followed by a ketol-acid reduction of (S)-2-acetolactate (S2AL) to yield (R)-2,3-dihydroxy-isovalerate. In the isomerase reaction, S2AL is rearranged via a Mg-dependent methyl migration to produce 3-hydroxy-3-methyl-2-ketobutyrate (HMKB). In the reductase reaction, this 2-ketoacid undergoes a metal-dependent reduction by NADPH to yield (R)-2,3-dihydroxy-isovalerate.</text>
</comment>
<comment type="catalytic activity">
    <reaction evidence="1">
        <text>(2R)-2,3-dihydroxy-3-methylbutanoate + NADP(+) = (2S)-2-acetolactate + NADPH + H(+)</text>
        <dbReference type="Rhea" id="RHEA:22068"/>
        <dbReference type="ChEBI" id="CHEBI:15378"/>
        <dbReference type="ChEBI" id="CHEBI:49072"/>
        <dbReference type="ChEBI" id="CHEBI:57783"/>
        <dbReference type="ChEBI" id="CHEBI:58349"/>
        <dbReference type="ChEBI" id="CHEBI:58476"/>
        <dbReference type="EC" id="1.1.1.86"/>
    </reaction>
</comment>
<comment type="catalytic activity">
    <reaction evidence="1">
        <text>(2R,3R)-2,3-dihydroxy-3-methylpentanoate + NADP(+) = (S)-2-ethyl-2-hydroxy-3-oxobutanoate + NADPH + H(+)</text>
        <dbReference type="Rhea" id="RHEA:13493"/>
        <dbReference type="ChEBI" id="CHEBI:15378"/>
        <dbReference type="ChEBI" id="CHEBI:49256"/>
        <dbReference type="ChEBI" id="CHEBI:49258"/>
        <dbReference type="ChEBI" id="CHEBI:57783"/>
        <dbReference type="ChEBI" id="CHEBI:58349"/>
        <dbReference type="EC" id="1.1.1.86"/>
    </reaction>
</comment>
<comment type="cofactor">
    <cofactor evidence="1">
        <name>Mg(2+)</name>
        <dbReference type="ChEBI" id="CHEBI:18420"/>
    </cofactor>
    <text evidence="1">Binds 2 magnesium ions per subunit.</text>
</comment>
<comment type="pathway">
    <text evidence="1">Amino-acid biosynthesis; L-isoleucine biosynthesis; L-isoleucine from 2-oxobutanoate: step 2/4.</text>
</comment>
<comment type="pathway">
    <text evidence="1">Amino-acid biosynthesis; L-valine biosynthesis; L-valine from pyruvate: step 2/4.</text>
</comment>
<comment type="similarity">
    <text evidence="1">Belongs to the ketol-acid reductoisomerase family.</text>
</comment>
<name>ILVC_STAA3</name>
<feature type="chain" id="PRO_0000252792" description="Ketol-acid reductoisomerase (NADP(+))">
    <location>
        <begin position="1"/>
        <end position="334"/>
    </location>
</feature>
<feature type="domain" description="KARI N-terminal Rossmann" evidence="2">
    <location>
        <begin position="1"/>
        <end position="181"/>
    </location>
</feature>
<feature type="domain" description="KARI C-terminal knotted" evidence="3">
    <location>
        <begin position="182"/>
        <end position="327"/>
    </location>
</feature>
<feature type="active site" evidence="1">
    <location>
        <position position="107"/>
    </location>
</feature>
<feature type="binding site" evidence="1">
    <location>
        <begin position="25"/>
        <end position="28"/>
    </location>
    <ligand>
        <name>NADP(+)</name>
        <dbReference type="ChEBI" id="CHEBI:58349"/>
    </ligand>
</feature>
<feature type="binding site" evidence="1">
    <location>
        <position position="48"/>
    </location>
    <ligand>
        <name>NADP(+)</name>
        <dbReference type="ChEBI" id="CHEBI:58349"/>
    </ligand>
</feature>
<feature type="binding site" evidence="1">
    <location>
        <position position="52"/>
    </location>
    <ligand>
        <name>NADP(+)</name>
        <dbReference type="ChEBI" id="CHEBI:58349"/>
    </ligand>
</feature>
<feature type="binding site" evidence="1">
    <location>
        <begin position="82"/>
        <end position="85"/>
    </location>
    <ligand>
        <name>NADP(+)</name>
        <dbReference type="ChEBI" id="CHEBI:58349"/>
    </ligand>
</feature>
<feature type="binding site" evidence="1">
    <location>
        <position position="133"/>
    </location>
    <ligand>
        <name>NADP(+)</name>
        <dbReference type="ChEBI" id="CHEBI:58349"/>
    </ligand>
</feature>
<feature type="binding site" evidence="1">
    <location>
        <position position="190"/>
    </location>
    <ligand>
        <name>Mg(2+)</name>
        <dbReference type="ChEBI" id="CHEBI:18420"/>
        <label>1</label>
    </ligand>
</feature>
<feature type="binding site" evidence="1">
    <location>
        <position position="190"/>
    </location>
    <ligand>
        <name>Mg(2+)</name>
        <dbReference type="ChEBI" id="CHEBI:18420"/>
        <label>2</label>
    </ligand>
</feature>
<feature type="binding site" evidence="1">
    <location>
        <position position="194"/>
    </location>
    <ligand>
        <name>Mg(2+)</name>
        <dbReference type="ChEBI" id="CHEBI:18420"/>
        <label>1</label>
    </ligand>
</feature>
<feature type="binding site" evidence="1">
    <location>
        <position position="226"/>
    </location>
    <ligand>
        <name>Mg(2+)</name>
        <dbReference type="ChEBI" id="CHEBI:18420"/>
        <label>2</label>
    </ligand>
</feature>
<feature type="binding site" evidence="1">
    <location>
        <position position="230"/>
    </location>
    <ligand>
        <name>Mg(2+)</name>
        <dbReference type="ChEBI" id="CHEBI:18420"/>
        <label>2</label>
    </ligand>
</feature>
<feature type="binding site" evidence="1">
    <location>
        <position position="251"/>
    </location>
    <ligand>
        <name>substrate</name>
    </ligand>
</feature>